<comment type="subcellular location">
    <subcellularLocation>
        <location evidence="3">Secreted</location>
    </subcellularLocation>
</comment>
<comment type="similarity">
    <text evidence="3">Belongs to the 'GDSL' lipolytic enzyme family.</text>
</comment>
<comment type="sequence caution" evidence="3">
    <conflict type="erroneous gene model prediction">
        <sequence resource="EMBL-CDS" id="CAB36525"/>
    </conflict>
</comment>
<comment type="sequence caution" evidence="3">
    <conflict type="erroneous gene model prediction">
        <sequence resource="EMBL-CDS" id="CAB79534"/>
    </conflict>
</comment>
<protein>
    <recommendedName>
        <fullName>GDSL esterase/lipase At4g26790</fullName>
        <ecNumber>3.1.1.-</ecNumber>
    </recommendedName>
    <alternativeName>
        <fullName>Extracellular lipase At4g26790</fullName>
    </alternativeName>
</protein>
<sequence>MQRNRVLAFLLLAAQLLVKIPETCAKFPALIVFGDSTVDSGNNNQISTVLKSNFQPYGRDYFDGKATGRFSNGRIAPDFISEGLGLKNAVPAYLDPAYNIADFATGVCFASAGTGLDNATSAVLSVMPLWKEVEYYKEYQTRLRSYLGEEKANEIISESLYLISIGTNDFLENYYLLPRKLRKYSVNEYQYFLIGIAADFVTDIYRLGARKMSLSGLSPFGCLPLERTTQLFYGSKCIEEYNIVARDFNIKMEEKVFQLNRDLNGIQLVFSNPYDLVSEIIYHPEAFGFENVRSACCGTGYYEMSYLCDKMNPFTCSDASKYVFWDSFHPTEKTNAIVANHVLKYDLSRFQ</sequence>
<organism>
    <name type="scientific">Arabidopsis thaliana</name>
    <name type="common">Mouse-ear cress</name>
    <dbReference type="NCBI Taxonomy" id="3702"/>
    <lineage>
        <taxon>Eukaryota</taxon>
        <taxon>Viridiplantae</taxon>
        <taxon>Streptophyta</taxon>
        <taxon>Embryophyta</taxon>
        <taxon>Tracheophyta</taxon>
        <taxon>Spermatophyta</taxon>
        <taxon>Magnoliopsida</taxon>
        <taxon>eudicotyledons</taxon>
        <taxon>Gunneridae</taxon>
        <taxon>Pentapetalae</taxon>
        <taxon>rosids</taxon>
        <taxon>malvids</taxon>
        <taxon>Brassicales</taxon>
        <taxon>Brassicaceae</taxon>
        <taxon>Camelineae</taxon>
        <taxon>Arabidopsis</taxon>
    </lineage>
</organism>
<gene>
    <name type="ordered locus">At4g26790</name>
    <name type="ORF">F10M23.130</name>
</gene>
<feature type="signal peptide" evidence="2">
    <location>
        <begin position="1"/>
        <end position="25"/>
    </location>
</feature>
<feature type="chain" id="PRO_0000367406" description="GDSL esterase/lipase At4g26790">
    <location>
        <begin position="26"/>
        <end position="351"/>
    </location>
</feature>
<feature type="active site" description="Nucleophile" evidence="1">
    <location>
        <position position="36"/>
    </location>
</feature>
<feature type="active site" evidence="1">
    <location>
        <position position="326"/>
    </location>
</feature>
<feature type="active site" evidence="1">
    <location>
        <position position="329"/>
    </location>
</feature>
<feature type="glycosylation site" description="N-linked (GlcNAc...) asparagine" evidence="2">
    <location>
        <position position="118"/>
    </location>
</feature>
<keyword id="KW-0325">Glycoprotein</keyword>
<keyword id="KW-0378">Hydrolase</keyword>
<keyword id="KW-0442">Lipid degradation</keyword>
<keyword id="KW-0443">Lipid metabolism</keyword>
<keyword id="KW-1185">Reference proteome</keyword>
<keyword id="KW-0964">Secreted</keyword>
<keyword id="KW-0732">Signal</keyword>
<dbReference type="EC" id="3.1.1.-"/>
<dbReference type="EMBL" id="AL035440">
    <property type="protein sequence ID" value="CAB36525.1"/>
    <property type="status" value="ALT_SEQ"/>
    <property type="molecule type" value="Genomic_DNA"/>
</dbReference>
<dbReference type="EMBL" id="AL161565">
    <property type="protein sequence ID" value="CAB79534.1"/>
    <property type="status" value="ALT_SEQ"/>
    <property type="molecule type" value="Genomic_DNA"/>
</dbReference>
<dbReference type="EMBL" id="CP002687">
    <property type="protein sequence ID" value="AEE85252.1"/>
    <property type="molecule type" value="Genomic_DNA"/>
</dbReference>
<dbReference type="EMBL" id="CP002687">
    <property type="protein sequence ID" value="AEE85253.1"/>
    <property type="molecule type" value="Genomic_DNA"/>
</dbReference>
<dbReference type="EMBL" id="AY072342">
    <property type="protein sequence ID" value="AAL61949.1"/>
    <property type="molecule type" value="mRNA"/>
</dbReference>
<dbReference type="EMBL" id="AY114586">
    <property type="protein sequence ID" value="AAM47905.1"/>
    <property type="molecule type" value="mRNA"/>
</dbReference>
<dbReference type="EMBL" id="AY086549">
    <property type="protein sequence ID" value="AAM63613.1"/>
    <property type="molecule type" value="mRNA"/>
</dbReference>
<dbReference type="PIR" id="T04802">
    <property type="entry name" value="T04802"/>
</dbReference>
<dbReference type="RefSeq" id="NP_567758.1">
    <property type="nucleotide sequence ID" value="NM_118813.2"/>
</dbReference>
<dbReference type="RefSeq" id="NP_849451.1">
    <property type="nucleotide sequence ID" value="NM_179120.1"/>
</dbReference>
<dbReference type="SMR" id="Q8VY93"/>
<dbReference type="FunCoup" id="Q8VY93">
    <property type="interactions" value="99"/>
</dbReference>
<dbReference type="STRING" id="3702.Q8VY93"/>
<dbReference type="GlyGen" id="Q8VY93">
    <property type="glycosylation" value="1 site"/>
</dbReference>
<dbReference type="PaxDb" id="3702-AT4G26790.1"/>
<dbReference type="ProteomicsDB" id="247103"/>
<dbReference type="EnsemblPlants" id="AT4G26790.1">
    <property type="protein sequence ID" value="AT4G26790.1"/>
    <property type="gene ID" value="AT4G26790"/>
</dbReference>
<dbReference type="EnsemblPlants" id="AT4G26790.2">
    <property type="protein sequence ID" value="AT4G26790.2"/>
    <property type="gene ID" value="AT4G26790"/>
</dbReference>
<dbReference type="GeneID" id="828786"/>
<dbReference type="Gramene" id="AT4G26790.1">
    <property type="protein sequence ID" value="AT4G26790.1"/>
    <property type="gene ID" value="AT4G26790"/>
</dbReference>
<dbReference type="Gramene" id="AT4G26790.2">
    <property type="protein sequence ID" value="AT4G26790.2"/>
    <property type="gene ID" value="AT4G26790"/>
</dbReference>
<dbReference type="KEGG" id="ath:AT4G26790"/>
<dbReference type="Araport" id="AT4G26790"/>
<dbReference type="TAIR" id="AT4G26790"/>
<dbReference type="eggNOG" id="ENOG502QQ8I">
    <property type="taxonomic scope" value="Eukaryota"/>
</dbReference>
<dbReference type="HOGENOM" id="CLU_015101_0_1_1"/>
<dbReference type="InParanoid" id="Q8VY93"/>
<dbReference type="OMA" id="DCIDEYN"/>
<dbReference type="PhylomeDB" id="Q8VY93"/>
<dbReference type="BioCyc" id="ARA:AT4G26790-MONOMER"/>
<dbReference type="PRO" id="PR:Q8VY93"/>
<dbReference type="Proteomes" id="UP000006548">
    <property type="component" value="Chromosome 4"/>
</dbReference>
<dbReference type="ExpressionAtlas" id="Q8VY93">
    <property type="expression patterns" value="baseline and differential"/>
</dbReference>
<dbReference type="GO" id="GO:0005576">
    <property type="term" value="C:extracellular region"/>
    <property type="evidence" value="ECO:0007669"/>
    <property type="project" value="UniProtKB-SubCell"/>
</dbReference>
<dbReference type="GO" id="GO:0016788">
    <property type="term" value="F:hydrolase activity, acting on ester bonds"/>
    <property type="evidence" value="ECO:0007669"/>
    <property type="project" value="InterPro"/>
</dbReference>
<dbReference type="GO" id="GO:0016042">
    <property type="term" value="P:lipid catabolic process"/>
    <property type="evidence" value="ECO:0007669"/>
    <property type="project" value="UniProtKB-KW"/>
</dbReference>
<dbReference type="CDD" id="cd01837">
    <property type="entry name" value="SGNH_plant_lipase_like"/>
    <property type="match status" value="1"/>
</dbReference>
<dbReference type="FunFam" id="3.40.50.1110:FF:000003">
    <property type="entry name" value="GDSL esterase/lipase APG"/>
    <property type="match status" value="1"/>
</dbReference>
<dbReference type="Gene3D" id="3.40.50.1110">
    <property type="entry name" value="SGNH hydrolase"/>
    <property type="match status" value="1"/>
</dbReference>
<dbReference type="InterPro" id="IPR001087">
    <property type="entry name" value="GDSL"/>
</dbReference>
<dbReference type="InterPro" id="IPR050592">
    <property type="entry name" value="GDSL_lipolytic_enzyme"/>
</dbReference>
<dbReference type="InterPro" id="IPR036514">
    <property type="entry name" value="SGNH_hydro_sf"/>
</dbReference>
<dbReference type="InterPro" id="IPR035669">
    <property type="entry name" value="SGNH_plant_lipase-like"/>
</dbReference>
<dbReference type="PANTHER" id="PTHR45642">
    <property type="entry name" value="GDSL ESTERASE/LIPASE EXL3"/>
    <property type="match status" value="1"/>
</dbReference>
<dbReference type="PANTHER" id="PTHR45642:SF46">
    <property type="entry name" value="OS06G0636700 PROTEIN"/>
    <property type="match status" value="1"/>
</dbReference>
<dbReference type="Pfam" id="PF00657">
    <property type="entry name" value="Lipase_GDSL"/>
    <property type="match status" value="1"/>
</dbReference>
<dbReference type="SUPFAM" id="SSF52266">
    <property type="entry name" value="SGNH hydrolase"/>
    <property type="match status" value="1"/>
</dbReference>
<name>GDL66_ARATH</name>
<proteinExistence type="evidence at transcript level"/>
<reference key="1">
    <citation type="journal article" date="1999" name="Nature">
        <title>Sequence and analysis of chromosome 4 of the plant Arabidopsis thaliana.</title>
        <authorList>
            <person name="Mayer K.F.X."/>
            <person name="Schueller C."/>
            <person name="Wambutt R."/>
            <person name="Murphy G."/>
            <person name="Volckaert G."/>
            <person name="Pohl T."/>
            <person name="Duesterhoeft A."/>
            <person name="Stiekema W."/>
            <person name="Entian K.-D."/>
            <person name="Terryn N."/>
            <person name="Harris B."/>
            <person name="Ansorge W."/>
            <person name="Brandt P."/>
            <person name="Grivell L.A."/>
            <person name="Rieger M."/>
            <person name="Weichselgartner M."/>
            <person name="de Simone V."/>
            <person name="Obermaier B."/>
            <person name="Mache R."/>
            <person name="Mueller M."/>
            <person name="Kreis M."/>
            <person name="Delseny M."/>
            <person name="Puigdomenech P."/>
            <person name="Watson M."/>
            <person name="Schmidtheini T."/>
            <person name="Reichert B."/>
            <person name="Portetelle D."/>
            <person name="Perez-Alonso M."/>
            <person name="Boutry M."/>
            <person name="Bancroft I."/>
            <person name="Vos P."/>
            <person name="Hoheisel J."/>
            <person name="Zimmermann W."/>
            <person name="Wedler H."/>
            <person name="Ridley P."/>
            <person name="Langham S.-A."/>
            <person name="McCullagh B."/>
            <person name="Bilham L."/>
            <person name="Robben J."/>
            <person name="van der Schueren J."/>
            <person name="Grymonprez B."/>
            <person name="Chuang Y.-J."/>
            <person name="Vandenbussche F."/>
            <person name="Braeken M."/>
            <person name="Weltjens I."/>
            <person name="Voet M."/>
            <person name="Bastiaens I."/>
            <person name="Aert R."/>
            <person name="Defoor E."/>
            <person name="Weitzenegger T."/>
            <person name="Bothe G."/>
            <person name="Ramsperger U."/>
            <person name="Hilbert H."/>
            <person name="Braun M."/>
            <person name="Holzer E."/>
            <person name="Brandt A."/>
            <person name="Peters S."/>
            <person name="van Staveren M."/>
            <person name="Dirkse W."/>
            <person name="Mooijman P."/>
            <person name="Klein Lankhorst R."/>
            <person name="Rose M."/>
            <person name="Hauf J."/>
            <person name="Koetter P."/>
            <person name="Berneiser S."/>
            <person name="Hempel S."/>
            <person name="Feldpausch M."/>
            <person name="Lamberth S."/>
            <person name="Van den Daele H."/>
            <person name="De Keyser A."/>
            <person name="Buysshaert C."/>
            <person name="Gielen J."/>
            <person name="Villarroel R."/>
            <person name="De Clercq R."/>
            <person name="van Montagu M."/>
            <person name="Rogers J."/>
            <person name="Cronin A."/>
            <person name="Quail M.A."/>
            <person name="Bray-Allen S."/>
            <person name="Clark L."/>
            <person name="Doggett J."/>
            <person name="Hall S."/>
            <person name="Kay M."/>
            <person name="Lennard N."/>
            <person name="McLay K."/>
            <person name="Mayes R."/>
            <person name="Pettett A."/>
            <person name="Rajandream M.A."/>
            <person name="Lyne M."/>
            <person name="Benes V."/>
            <person name="Rechmann S."/>
            <person name="Borkova D."/>
            <person name="Bloecker H."/>
            <person name="Scharfe M."/>
            <person name="Grimm M."/>
            <person name="Loehnert T.-H."/>
            <person name="Dose S."/>
            <person name="de Haan M."/>
            <person name="Maarse A.C."/>
            <person name="Schaefer M."/>
            <person name="Mueller-Auer S."/>
            <person name="Gabel C."/>
            <person name="Fuchs M."/>
            <person name="Fartmann B."/>
            <person name="Granderath K."/>
            <person name="Dauner D."/>
            <person name="Herzl A."/>
            <person name="Neumann S."/>
            <person name="Argiriou A."/>
            <person name="Vitale D."/>
            <person name="Liguori R."/>
            <person name="Piravandi E."/>
            <person name="Massenet O."/>
            <person name="Quigley F."/>
            <person name="Clabauld G."/>
            <person name="Muendlein A."/>
            <person name="Felber R."/>
            <person name="Schnabl S."/>
            <person name="Hiller R."/>
            <person name="Schmidt W."/>
            <person name="Lecharny A."/>
            <person name="Aubourg S."/>
            <person name="Chefdor F."/>
            <person name="Cooke R."/>
            <person name="Berger C."/>
            <person name="Monfort A."/>
            <person name="Casacuberta E."/>
            <person name="Gibbons T."/>
            <person name="Weber N."/>
            <person name="Vandenbol M."/>
            <person name="Bargues M."/>
            <person name="Terol J."/>
            <person name="Torres A."/>
            <person name="Perez-Perez A."/>
            <person name="Purnelle B."/>
            <person name="Bent E."/>
            <person name="Johnson S."/>
            <person name="Tacon D."/>
            <person name="Jesse T."/>
            <person name="Heijnen L."/>
            <person name="Schwarz S."/>
            <person name="Scholler P."/>
            <person name="Heber S."/>
            <person name="Francs P."/>
            <person name="Bielke C."/>
            <person name="Frishman D."/>
            <person name="Haase D."/>
            <person name="Lemcke K."/>
            <person name="Mewes H.-W."/>
            <person name="Stocker S."/>
            <person name="Zaccaria P."/>
            <person name="Bevan M."/>
            <person name="Wilson R.K."/>
            <person name="de la Bastide M."/>
            <person name="Habermann K."/>
            <person name="Parnell L."/>
            <person name="Dedhia N."/>
            <person name="Gnoj L."/>
            <person name="Schutz K."/>
            <person name="Huang E."/>
            <person name="Spiegel L."/>
            <person name="Sekhon M."/>
            <person name="Murray J."/>
            <person name="Sheet P."/>
            <person name="Cordes M."/>
            <person name="Abu-Threideh J."/>
            <person name="Stoneking T."/>
            <person name="Kalicki J."/>
            <person name="Graves T."/>
            <person name="Harmon G."/>
            <person name="Edwards J."/>
            <person name="Latreille P."/>
            <person name="Courtney L."/>
            <person name="Cloud J."/>
            <person name="Abbott A."/>
            <person name="Scott K."/>
            <person name="Johnson D."/>
            <person name="Minx P."/>
            <person name="Bentley D."/>
            <person name="Fulton B."/>
            <person name="Miller N."/>
            <person name="Greco T."/>
            <person name="Kemp K."/>
            <person name="Kramer J."/>
            <person name="Fulton L."/>
            <person name="Mardis E."/>
            <person name="Dante M."/>
            <person name="Pepin K."/>
            <person name="Hillier L.W."/>
            <person name="Nelson J."/>
            <person name="Spieth J."/>
            <person name="Ryan E."/>
            <person name="Andrews S."/>
            <person name="Geisel C."/>
            <person name="Layman D."/>
            <person name="Du H."/>
            <person name="Ali J."/>
            <person name="Berghoff A."/>
            <person name="Jones K."/>
            <person name="Drone K."/>
            <person name="Cotton M."/>
            <person name="Joshu C."/>
            <person name="Antonoiu B."/>
            <person name="Zidanic M."/>
            <person name="Strong C."/>
            <person name="Sun H."/>
            <person name="Lamar B."/>
            <person name="Yordan C."/>
            <person name="Ma P."/>
            <person name="Zhong J."/>
            <person name="Preston R."/>
            <person name="Vil D."/>
            <person name="Shekher M."/>
            <person name="Matero A."/>
            <person name="Shah R."/>
            <person name="Swaby I.K."/>
            <person name="O'Shaughnessy A."/>
            <person name="Rodriguez M."/>
            <person name="Hoffman J."/>
            <person name="Till S."/>
            <person name="Granat S."/>
            <person name="Shohdy N."/>
            <person name="Hasegawa A."/>
            <person name="Hameed A."/>
            <person name="Lodhi M."/>
            <person name="Johnson A."/>
            <person name="Chen E."/>
            <person name="Marra M.A."/>
            <person name="Martienssen R."/>
            <person name="McCombie W.R."/>
        </authorList>
    </citation>
    <scope>NUCLEOTIDE SEQUENCE [LARGE SCALE GENOMIC DNA]</scope>
    <source>
        <strain>cv. Columbia</strain>
    </source>
</reference>
<reference key="2">
    <citation type="journal article" date="2017" name="Plant J.">
        <title>Araport11: a complete reannotation of the Arabidopsis thaliana reference genome.</title>
        <authorList>
            <person name="Cheng C.Y."/>
            <person name="Krishnakumar V."/>
            <person name="Chan A.P."/>
            <person name="Thibaud-Nissen F."/>
            <person name="Schobel S."/>
            <person name="Town C.D."/>
        </authorList>
    </citation>
    <scope>GENOME REANNOTATION</scope>
    <source>
        <strain>cv. Columbia</strain>
    </source>
</reference>
<reference key="3">
    <citation type="journal article" date="2003" name="Science">
        <title>Empirical analysis of transcriptional activity in the Arabidopsis genome.</title>
        <authorList>
            <person name="Yamada K."/>
            <person name="Lim J."/>
            <person name="Dale J.M."/>
            <person name="Chen H."/>
            <person name="Shinn P."/>
            <person name="Palm C.J."/>
            <person name="Southwick A.M."/>
            <person name="Wu H.C."/>
            <person name="Kim C.J."/>
            <person name="Nguyen M."/>
            <person name="Pham P.K."/>
            <person name="Cheuk R.F."/>
            <person name="Karlin-Newmann G."/>
            <person name="Liu S.X."/>
            <person name="Lam B."/>
            <person name="Sakano H."/>
            <person name="Wu T."/>
            <person name="Yu G."/>
            <person name="Miranda M."/>
            <person name="Quach H.L."/>
            <person name="Tripp M."/>
            <person name="Chang C.H."/>
            <person name="Lee J.M."/>
            <person name="Toriumi M.J."/>
            <person name="Chan M.M."/>
            <person name="Tang C.C."/>
            <person name="Onodera C.S."/>
            <person name="Deng J.M."/>
            <person name="Akiyama K."/>
            <person name="Ansari Y."/>
            <person name="Arakawa T."/>
            <person name="Banh J."/>
            <person name="Banno F."/>
            <person name="Bowser L."/>
            <person name="Brooks S.Y."/>
            <person name="Carninci P."/>
            <person name="Chao Q."/>
            <person name="Choy N."/>
            <person name="Enju A."/>
            <person name="Goldsmith A.D."/>
            <person name="Gurjal M."/>
            <person name="Hansen N.F."/>
            <person name="Hayashizaki Y."/>
            <person name="Johnson-Hopson C."/>
            <person name="Hsuan V.W."/>
            <person name="Iida K."/>
            <person name="Karnes M."/>
            <person name="Khan S."/>
            <person name="Koesema E."/>
            <person name="Ishida J."/>
            <person name="Jiang P.X."/>
            <person name="Jones T."/>
            <person name="Kawai J."/>
            <person name="Kamiya A."/>
            <person name="Meyers C."/>
            <person name="Nakajima M."/>
            <person name="Narusaka M."/>
            <person name="Seki M."/>
            <person name="Sakurai T."/>
            <person name="Satou M."/>
            <person name="Tamse R."/>
            <person name="Vaysberg M."/>
            <person name="Wallender E.K."/>
            <person name="Wong C."/>
            <person name="Yamamura Y."/>
            <person name="Yuan S."/>
            <person name="Shinozaki K."/>
            <person name="Davis R.W."/>
            <person name="Theologis A."/>
            <person name="Ecker J.R."/>
        </authorList>
    </citation>
    <scope>NUCLEOTIDE SEQUENCE [LARGE SCALE MRNA]</scope>
    <source>
        <strain>cv. Columbia</strain>
    </source>
</reference>
<reference key="4">
    <citation type="submission" date="2002-03" db="EMBL/GenBank/DDBJ databases">
        <title>Full-length cDNA from Arabidopsis thaliana.</title>
        <authorList>
            <person name="Brover V.V."/>
            <person name="Troukhan M.E."/>
            <person name="Alexandrov N.A."/>
            <person name="Lu Y.-P."/>
            <person name="Flavell R.B."/>
            <person name="Feldmann K.A."/>
        </authorList>
    </citation>
    <scope>NUCLEOTIDE SEQUENCE [LARGE SCALE MRNA]</scope>
</reference>
<reference key="5">
    <citation type="journal article" date="2004" name="Prog. Lipid Res.">
        <title>GDSL family of serine esterases/lipases.</title>
        <authorList>
            <person name="Akoh C.C."/>
            <person name="Lee G.-C."/>
            <person name="Liaw Y.-C."/>
            <person name="Huang T.-H."/>
            <person name="Shaw J.-F."/>
        </authorList>
    </citation>
    <scope>REVIEW</scope>
</reference>
<reference key="6">
    <citation type="journal article" date="2008" name="Pak. J. Biol. Sci.">
        <title>Sequence analysis of GDSL lipase gene family in Arabidopsis thaliana.</title>
        <authorList>
            <person name="Ling H."/>
        </authorList>
    </citation>
    <scope>GENE FAMILY</scope>
</reference>
<evidence type="ECO:0000250" key="1"/>
<evidence type="ECO:0000255" key="2"/>
<evidence type="ECO:0000305" key="3"/>
<accession>Q8VY93</accession>
<accession>Q9SZ19</accession>